<comment type="function">
    <text evidence="1">Catalyzes the ATP-dependent 2-thiolation of cytidine in position 32 of tRNA, to form 2-thiocytidine (s(2)C32). The sulfur atoms are provided by the cysteine/cysteine desulfurase (IscS) system.</text>
</comment>
<comment type="catalytic activity">
    <reaction evidence="1">
        <text>cytidine(32) in tRNA + S-sulfanyl-L-cysteinyl-[cysteine desulfurase] + AH2 + ATP = 2-thiocytidine(32) in tRNA + L-cysteinyl-[cysteine desulfurase] + A + AMP + diphosphate + H(+)</text>
        <dbReference type="Rhea" id="RHEA:57048"/>
        <dbReference type="Rhea" id="RHEA-COMP:10288"/>
        <dbReference type="Rhea" id="RHEA-COMP:12157"/>
        <dbReference type="Rhea" id="RHEA-COMP:12158"/>
        <dbReference type="Rhea" id="RHEA-COMP:14821"/>
        <dbReference type="ChEBI" id="CHEBI:13193"/>
        <dbReference type="ChEBI" id="CHEBI:15378"/>
        <dbReference type="ChEBI" id="CHEBI:17499"/>
        <dbReference type="ChEBI" id="CHEBI:29950"/>
        <dbReference type="ChEBI" id="CHEBI:30616"/>
        <dbReference type="ChEBI" id="CHEBI:33019"/>
        <dbReference type="ChEBI" id="CHEBI:61963"/>
        <dbReference type="ChEBI" id="CHEBI:82748"/>
        <dbReference type="ChEBI" id="CHEBI:141453"/>
        <dbReference type="ChEBI" id="CHEBI:456215"/>
    </reaction>
    <physiologicalReaction direction="left-to-right" evidence="1">
        <dbReference type="Rhea" id="RHEA:57049"/>
    </physiologicalReaction>
</comment>
<comment type="cofactor">
    <cofactor evidence="1">
        <name>Mg(2+)</name>
        <dbReference type="ChEBI" id="CHEBI:18420"/>
    </cofactor>
</comment>
<comment type="cofactor">
    <cofactor evidence="1">
        <name>[4Fe-4S] cluster</name>
        <dbReference type="ChEBI" id="CHEBI:49883"/>
    </cofactor>
    <text evidence="1">Binds 1 [4Fe-4S] cluster per subunit. The cluster is chelated by three Cys residues, the fourth Fe has a free coordination site that may bind a sulfur atom transferred from the persulfide of IscS.</text>
</comment>
<comment type="pathway">
    <text evidence="1">tRNA modification.</text>
</comment>
<comment type="subunit">
    <text evidence="1">Homodimer.</text>
</comment>
<comment type="subcellular location">
    <subcellularLocation>
        <location evidence="1">Cytoplasm</location>
    </subcellularLocation>
</comment>
<comment type="miscellaneous">
    <text evidence="1">The thiolation reaction likely consists of two steps: a first activation step by ATP to form an adenylated intermediate of the target base of tRNA, and a second nucleophilic substitution step of the sulfur (S) atom supplied by the hydrosulfide attached to the Fe-S cluster.</text>
</comment>
<comment type="similarity">
    <text evidence="1">Belongs to the TtcA family.</text>
</comment>
<proteinExistence type="inferred from homology"/>
<sequence length="259" mass="29404">MKSAVNFELPLAVKIRKQIVQALNDFNMIEDGDKVMVCVSGGKDSSVLLALLTEIQRRSERKFQIEAAILDQKQPGFDVSKFKVWVESLGVPFHIVEKDTYSIVKEKVQGGTFCSLCSRLRRAILYDFAHANGFTKLALGHHRDDVVHTALLNMFYVGTTAAMPPKLKSDDERNILVRPLCYVSERDIEELAAEWAFPVIPCNLCGSQDGLKRQRIKKLVRDLEKEIPNIYASIQTSMTNIKPSQLMDQDLWDFKNLKT</sequence>
<organism>
    <name type="scientific">Bdellovibrio bacteriovorus (strain ATCC 15356 / DSM 50701 / NCIMB 9529 / HD100)</name>
    <dbReference type="NCBI Taxonomy" id="264462"/>
    <lineage>
        <taxon>Bacteria</taxon>
        <taxon>Pseudomonadati</taxon>
        <taxon>Bdellovibrionota</taxon>
        <taxon>Bdellovibrionia</taxon>
        <taxon>Bdellovibrionales</taxon>
        <taxon>Pseudobdellovibrionaceae</taxon>
        <taxon>Bdellovibrio</taxon>
    </lineage>
</organism>
<dbReference type="EC" id="2.8.1.-" evidence="1"/>
<dbReference type="EMBL" id="BX842651">
    <property type="protein sequence ID" value="CAE79910.1"/>
    <property type="molecule type" value="Genomic_DNA"/>
</dbReference>
<dbReference type="RefSeq" id="WP_011164512.1">
    <property type="nucleotide sequence ID" value="NC_005363.1"/>
</dbReference>
<dbReference type="SMR" id="Q6MLE7"/>
<dbReference type="STRING" id="264462.Bd2064"/>
<dbReference type="GeneID" id="93013011"/>
<dbReference type="KEGG" id="bba:Bd2064"/>
<dbReference type="eggNOG" id="COG0037">
    <property type="taxonomic scope" value="Bacteria"/>
</dbReference>
<dbReference type="HOGENOM" id="CLU_026481_0_0_7"/>
<dbReference type="Proteomes" id="UP000008080">
    <property type="component" value="Chromosome"/>
</dbReference>
<dbReference type="GO" id="GO:0005737">
    <property type="term" value="C:cytoplasm"/>
    <property type="evidence" value="ECO:0007669"/>
    <property type="project" value="UniProtKB-SubCell"/>
</dbReference>
<dbReference type="GO" id="GO:0051539">
    <property type="term" value="F:4 iron, 4 sulfur cluster binding"/>
    <property type="evidence" value="ECO:0007669"/>
    <property type="project" value="UniProtKB-KW"/>
</dbReference>
<dbReference type="GO" id="GO:0005524">
    <property type="term" value="F:ATP binding"/>
    <property type="evidence" value="ECO:0007669"/>
    <property type="project" value="UniProtKB-KW"/>
</dbReference>
<dbReference type="GO" id="GO:0046872">
    <property type="term" value="F:metal ion binding"/>
    <property type="evidence" value="ECO:0007669"/>
    <property type="project" value="UniProtKB-KW"/>
</dbReference>
<dbReference type="GO" id="GO:0016740">
    <property type="term" value="F:transferase activity"/>
    <property type="evidence" value="ECO:0007669"/>
    <property type="project" value="UniProtKB-KW"/>
</dbReference>
<dbReference type="GO" id="GO:0000049">
    <property type="term" value="F:tRNA binding"/>
    <property type="evidence" value="ECO:0007669"/>
    <property type="project" value="UniProtKB-KW"/>
</dbReference>
<dbReference type="GO" id="GO:0006400">
    <property type="term" value="P:tRNA modification"/>
    <property type="evidence" value="ECO:0007669"/>
    <property type="project" value="UniProtKB-ARBA"/>
</dbReference>
<dbReference type="CDD" id="cd24138">
    <property type="entry name" value="TtcA-like"/>
    <property type="match status" value="1"/>
</dbReference>
<dbReference type="Gene3D" id="3.40.50.620">
    <property type="entry name" value="HUPs"/>
    <property type="match status" value="1"/>
</dbReference>
<dbReference type="HAMAP" id="MF_01850">
    <property type="entry name" value="TtcA"/>
    <property type="match status" value="1"/>
</dbReference>
<dbReference type="InterPro" id="IPR014729">
    <property type="entry name" value="Rossmann-like_a/b/a_fold"/>
</dbReference>
<dbReference type="InterPro" id="IPR011063">
    <property type="entry name" value="TilS/TtcA_N"/>
</dbReference>
<dbReference type="InterPro" id="IPR012089">
    <property type="entry name" value="tRNA_Cyd_32_2_STrfase"/>
</dbReference>
<dbReference type="InterPro" id="IPR035107">
    <property type="entry name" value="tRNA_thiolation_TtcA_Ctu1"/>
</dbReference>
<dbReference type="NCBIfam" id="NF007972">
    <property type="entry name" value="PRK10696.1"/>
    <property type="match status" value="1"/>
</dbReference>
<dbReference type="PANTHER" id="PTHR43686:SF1">
    <property type="entry name" value="AMINOTRAN_5 DOMAIN-CONTAINING PROTEIN"/>
    <property type="match status" value="1"/>
</dbReference>
<dbReference type="PANTHER" id="PTHR43686">
    <property type="entry name" value="SULFURTRANSFERASE-RELATED"/>
    <property type="match status" value="1"/>
</dbReference>
<dbReference type="Pfam" id="PF01171">
    <property type="entry name" value="ATP_bind_3"/>
    <property type="match status" value="1"/>
</dbReference>
<dbReference type="PIRSF" id="PIRSF004976">
    <property type="entry name" value="ATPase_YdaO"/>
    <property type="match status" value="1"/>
</dbReference>
<dbReference type="SUPFAM" id="SSF52402">
    <property type="entry name" value="Adenine nucleotide alpha hydrolases-like"/>
    <property type="match status" value="1"/>
</dbReference>
<reference key="1">
    <citation type="journal article" date="2004" name="Science">
        <title>A predator unmasked: life cycle of Bdellovibrio bacteriovorus from a genomic perspective.</title>
        <authorList>
            <person name="Rendulic S."/>
            <person name="Jagtap P."/>
            <person name="Rosinus A."/>
            <person name="Eppinger M."/>
            <person name="Baar C."/>
            <person name="Lanz C."/>
            <person name="Keller H."/>
            <person name="Lambert C."/>
            <person name="Evans K.J."/>
            <person name="Goesmann A."/>
            <person name="Meyer F."/>
            <person name="Sockett R.E."/>
            <person name="Schuster S.C."/>
        </authorList>
    </citation>
    <scope>NUCLEOTIDE SEQUENCE [LARGE SCALE GENOMIC DNA]</scope>
    <source>
        <strain>ATCC 15356 / DSM 50701 / NCIMB 9529 / HD100</strain>
    </source>
</reference>
<name>TTCA_BDEBA</name>
<feature type="chain" id="PRO_0000348666" description="tRNA-cytidine(32) 2-sulfurtransferase">
    <location>
        <begin position="1"/>
        <end position="259"/>
    </location>
</feature>
<feature type="short sequence motif" description="PP-loop motif" evidence="1">
    <location>
        <begin position="40"/>
        <end position="45"/>
    </location>
</feature>
<feature type="binding site" evidence="1">
    <location>
        <position position="114"/>
    </location>
    <ligand>
        <name>[4Fe-4S] cluster</name>
        <dbReference type="ChEBI" id="CHEBI:49883"/>
    </ligand>
</feature>
<feature type="binding site" evidence="1">
    <location>
        <position position="117"/>
    </location>
    <ligand>
        <name>[4Fe-4S] cluster</name>
        <dbReference type="ChEBI" id="CHEBI:49883"/>
    </ligand>
</feature>
<feature type="binding site" evidence="1">
    <location>
        <position position="205"/>
    </location>
    <ligand>
        <name>[4Fe-4S] cluster</name>
        <dbReference type="ChEBI" id="CHEBI:49883"/>
    </ligand>
</feature>
<evidence type="ECO:0000255" key="1">
    <source>
        <dbReference type="HAMAP-Rule" id="MF_01850"/>
    </source>
</evidence>
<protein>
    <recommendedName>
        <fullName evidence="1">tRNA-cytidine(32) 2-sulfurtransferase</fullName>
        <ecNumber evidence="1">2.8.1.-</ecNumber>
    </recommendedName>
    <alternativeName>
        <fullName evidence="1">Two-thiocytidine biosynthesis protein A</fullName>
    </alternativeName>
    <alternativeName>
        <fullName evidence="1">tRNA 2-thiocytidine biosynthesis protein TtcA</fullName>
    </alternativeName>
</protein>
<accession>Q6MLE7</accession>
<gene>
    <name evidence="1" type="primary">ttcA</name>
    <name type="ordered locus">Bd2064</name>
</gene>
<keyword id="KW-0004">4Fe-4S</keyword>
<keyword id="KW-0067">ATP-binding</keyword>
<keyword id="KW-0963">Cytoplasm</keyword>
<keyword id="KW-0408">Iron</keyword>
<keyword id="KW-0411">Iron-sulfur</keyword>
<keyword id="KW-0460">Magnesium</keyword>
<keyword id="KW-0479">Metal-binding</keyword>
<keyword id="KW-0547">Nucleotide-binding</keyword>
<keyword id="KW-1185">Reference proteome</keyword>
<keyword id="KW-0694">RNA-binding</keyword>
<keyword id="KW-0808">Transferase</keyword>
<keyword id="KW-0819">tRNA processing</keyword>
<keyword id="KW-0820">tRNA-binding</keyword>